<evidence type="ECO:0000255" key="1">
    <source>
        <dbReference type="HAMAP-Rule" id="MF_01343"/>
    </source>
</evidence>
<evidence type="ECO:0000305" key="2"/>
<keyword id="KW-1185">Reference proteome</keyword>
<keyword id="KW-0687">Ribonucleoprotein</keyword>
<keyword id="KW-0689">Ribosomal protein</keyword>
<keyword id="KW-0694">RNA-binding</keyword>
<keyword id="KW-0699">rRNA-binding</keyword>
<dbReference type="EMBL" id="CR378664">
    <property type="protein sequence ID" value="CAG19036.1"/>
    <property type="molecule type" value="Genomic_DNA"/>
</dbReference>
<dbReference type="RefSeq" id="WP_011217385.1">
    <property type="nucleotide sequence ID" value="NC_006370.1"/>
</dbReference>
<dbReference type="SMR" id="Q6LUI9"/>
<dbReference type="STRING" id="298386.PBPRA0615"/>
<dbReference type="KEGG" id="ppr:PBPRA0615"/>
<dbReference type="eggNOG" id="COG0184">
    <property type="taxonomic scope" value="Bacteria"/>
</dbReference>
<dbReference type="HOGENOM" id="CLU_148518_0_0_6"/>
<dbReference type="Proteomes" id="UP000000593">
    <property type="component" value="Chromosome 1"/>
</dbReference>
<dbReference type="GO" id="GO:0022627">
    <property type="term" value="C:cytosolic small ribosomal subunit"/>
    <property type="evidence" value="ECO:0007669"/>
    <property type="project" value="TreeGrafter"/>
</dbReference>
<dbReference type="GO" id="GO:0019843">
    <property type="term" value="F:rRNA binding"/>
    <property type="evidence" value="ECO:0007669"/>
    <property type="project" value="UniProtKB-UniRule"/>
</dbReference>
<dbReference type="GO" id="GO:0003735">
    <property type="term" value="F:structural constituent of ribosome"/>
    <property type="evidence" value="ECO:0007669"/>
    <property type="project" value="InterPro"/>
</dbReference>
<dbReference type="GO" id="GO:0006412">
    <property type="term" value="P:translation"/>
    <property type="evidence" value="ECO:0007669"/>
    <property type="project" value="UniProtKB-UniRule"/>
</dbReference>
<dbReference type="CDD" id="cd00353">
    <property type="entry name" value="Ribosomal_S15p_S13e"/>
    <property type="match status" value="1"/>
</dbReference>
<dbReference type="FunFam" id="1.10.287.10:FF:000002">
    <property type="entry name" value="30S ribosomal protein S15"/>
    <property type="match status" value="1"/>
</dbReference>
<dbReference type="Gene3D" id="6.10.250.3130">
    <property type="match status" value="1"/>
</dbReference>
<dbReference type="Gene3D" id="1.10.287.10">
    <property type="entry name" value="S15/NS1, RNA-binding"/>
    <property type="match status" value="1"/>
</dbReference>
<dbReference type="HAMAP" id="MF_01343_B">
    <property type="entry name" value="Ribosomal_uS15_B"/>
    <property type="match status" value="1"/>
</dbReference>
<dbReference type="InterPro" id="IPR000589">
    <property type="entry name" value="Ribosomal_uS15"/>
</dbReference>
<dbReference type="InterPro" id="IPR005290">
    <property type="entry name" value="Ribosomal_uS15_bac-type"/>
</dbReference>
<dbReference type="InterPro" id="IPR009068">
    <property type="entry name" value="uS15_NS1_RNA-bd_sf"/>
</dbReference>
<dbReference type="NCBIfam" id="TIGR00952">
    <property type="entry name" value="S15_bact"/>
    <property type="match status" value="1"/>
</dbReference>
<dbReference type="PANTHER" id="PTHR23321">
    <property type="entry name" value="RIBOSOMAL PROTEIN S15, BACTERIAL AND ORGANELLAR"/>
    <property type="match status" value="1"/>
</dbReference>
<dbReference type="PANTHER" id="PTHR23321:SF26">
    <property type="entry name" value="SMALL RIBOSOMAL SUBUNIT PROTEIN US15M"/>
    <property type="match status" value="1"/>
</dbReference>
<dbReference type="Pfam" id="PF00312">
    <property type="entry name" value="Ribosomal_S15"/>
    <property type="match status" value="1"/>
</dbReference>
<dbReference type="SMART" id="SM01387">
    <property type="entry name" value="Ribosomal_S15"/>
    <property type="match status" value="1"/>
</dbReference>
<dbReference type="SUPFAM" id="SSF47060">
    <property type="entry name" value="S15/NS1 RNA-binding domain"/>
    <property type="match status" value="1"/>
</dbReference>
<dbReference type="PROSITE" id="PS00362">
    <property type="entry name" value="RIBOSOMAL_S15"/>
    <property type="match status" value="1"/>
</dbReference>
<feature type="chain" id="PRO_0000115500" description="Small ribosomal subunit protein uS15">
    <location>
        <begin position="1"/>
        <end position="89"/>
    </location>
</feature>
<protein>
    <recommendedName>
        <fullName evidence="1">Small ribosomal subunit protein uS15</fullName>
    </recommendedName>
    <alternativeName>
        <fullName evidence="2">30S ribosomal protein S15</fullName>
    </alternativeName>
</protein>
<comment type="function">
    <text evidence="1">One of the primary rRNA binding proteins, it binds directly to 16S rRNA where it helps nucleate assembly of the platform of the 30S subunit by binding and bridging several RNA helices of the 16S rRNA.</text>
</comment>
<comment type="function">
    <text evidence="1">Forms an intersubunit bridge (bridge B4) with the 23S rRNA of the 50S subunit in the ribosome.</text>
</comment>
<comment type="subunit">
    <text evidence="1">Part of the 30S ribosomal subunit. Forms a bridge to the 50S subunit in the 70S ribosome, contacting the 23S rRNA.</text>
</comment>
<comment type="similarity">
    <text evidence="1">Belongs to the universal ribosomal protein uS15 family.</text>
</comment>
<organism>
    <name type="scientific">Photobacterium profundum (strain SS9)</name>
    <dbReference type="NCBI Taxonomy" id="298386"/>
    <lineage>
        <taxon>Bacteria</taxon>
        <taxon>Pseudomonadati</taxon>
        <taxon>Pseudomonadota</taxon>
        <taxon>Gammaproteobacteria</taxon>
        <taxon>Vibrionales</taxon>
        <taxon>Vibrionaceae</taxon>
        <taxon>Photobacterium</taxon>
    </lineage>
</organism>
<gene>
    <name evidence="1" type="primary">rpsO</name>
    <name evidence="1" type="synonym">rps15</name>
    <name type="ordered locus">PBPRA0615</name>
</gene>
<name>RS15_PHOPR</name>
<sequence length="89" mass="10302">MSLNAETKAAIVAEYAQCENDTGSPEVQVALLTAQINHLQGHFANHKHDHHSRRGLLRMVSRRRKLLDYLKGKNLDRYQDLIKRQGLRR</sequence>
<accession>Q6LUI9</accession>
<proteinExistence type="inferred from homology"/>
<reference key="1">
    <citation type="journal article" date="2005" name="Science">
        <title>Life at depth: Photobacterium profundum genome sequence and expression analysis.</title>
        <authorList>
            <person name="Vezzi A."/>
            <person name="Campanaro S."/>
            <person name="D'Angelo M."/>
            <person name="Simonato F."/>
            <person name="Vitulo N."/>
            <person name="Lauro F.M."/>
            <person name="Cestaro A."/>
            <person name="Malacrida G."/>
            <person name="Simionati B."/>
            <person name="Cannata N."/>
            <person name="Romualdi C."/>
            <person name="Bartlett D.H."/>
            <person name="Valle G."/>
        </authorList>
    </citation>
    <scope>NUCLEOTIDE SEQUENCE [LARGE SCALE GENOMIC DNA]</scope>
    <source>
        <strain>ATCC BAA-1253 / SS9</strain>
    </source>
</reference>